<protein>
    <recommendedName>
        <fullName evidence="1">Protein-methionine-sulfoxide reductase heme-binding subunit MsrQ</fullName>
    </recommendedName>
    <alternativeName>
        <fullName evidence="1">Flavocytochrome MsrQ</fullName>
    </alternativeName>
</protein>
<dbReference type="EMBL" id="AE005673">
    <property type="protein sequence ID" value="AAK24711.1"/>
    <property type="status" value="ALT_INIT"/>
    <property type="molecule type" value="Genomic_DNA"/>
</dbReference>
<dbReference type="PIR" id="C87589">
    <property type="entry name" value="C87589"/>
</dbReference>
<dbReference type="RefSeq" id="NP_421543.1">
    <property type="nucleotide sequence ID" value="NC_002696.2"/>
</dbReference>
<dbReference type="RefSeq" id="WP_010920588.1">
    <property type="nucleotide sequence ID" value="NC_002696.2"/>
</dbReference>
<dbReference type="SMR" id="Q9A4T3"/>
<dbReference type="STRING" id="190650.CC_2747"/>
<dbReference type="EnsemblBacteria" id="AAK24711">
    <property type="protein sequence ID" value="AAK24711"/>
    <property type="gene ID" value="CC_2747"/>
</dbReference>
<dbReference type="KEGG" id="ccr:CC_2747"/>
<dbReference type="PATRIC" id="fig|190650.5.peg.2748"/>
<dbReference type="eggNOG" id="COG2717">
    <property type="taxonomic scope" value="Bacteria"/>
</dbReference>
<dbReference type="HOGENOM" id="CLU_080662_0_1_5"/>
<dbReference type="Proteomes" id="UP000001816">
    <property type="component" value="Chromosome"/>
</dbReference>
<dbReference type="GO" id="GO:0005886">
    <property type="term" value="C:plasma membrane"/>
    <property type="evidence" value="ECO:0007669"/>
    <property type="project" value="UniProtKB-SubCell"/>
</dbReference>
<dbReference type="GO" id="GO:0009055">
    <property type="term" value="F:electron transfer activity"/>
    <property type="evidence" value="ECO:0007669"/>
    <property type="project" value="UniProtKB-UniRule"/>
</dbReference>
<dbReference type="GO" id="GO:0010181">
    <property type="term" value="F:FMN binding"/>
    <property type="evidence" value="ECO:0007669"/>
    <property type="project" value="UniProtKB-UniRule"/>
</dbReference>
<dbReference type="GO" id="GO:0020037">
    <property type="term" value="F:heme binding"/>
    <property type="evidence" value="ECO:0007669"/>
    <property type="project" value="UniProtKB-UniRule"/>
</dbReference>
<dbReference type="GO" id="GO:0046872">
    <property type="term" value="F:metal ion binding"/>
    <property type="evidence" value="ECO:0007669"/>
    <property type="project" value="UniProtKB-KW"/>
</dbReference>
<dbReference type="GO" id="GO:0016679">
    <property type="term" value="F:oxidoreductase activity, acting on diphenols and related substances as donors"/>
    <property type="evidence" value="ECO:0007669"/>
    <property type="project" value="TreeGrafter"/>
</dbReference>
<dbReference type="GO" id="GO:0030091">
    <property type="term" value="P:protein repair"/>
    <property type="evidence" value="ECO:0007669"/>
    <property type="project" value="UniProtKB-UniRule"/>
</dbReference>
<dbReference type="HAMAP" id="MF_01207">
    <property type="entry name" value="MsrQ"/>
    <property type="match status" value="1"/>
</dbReference>
<dbReference type="InterPro" id="IPR013130">
    <property type="entry name" value="Fe3_Rdtase_TM_dom"/>
</dbReference>
<dbReference type="InterPro" id="IPR022837">
    <property type="entry name" value="MsrQ-like"/>
</dbReference>
<dbReference type="NCBIfam" id="NF003835">
    <property type="entry name" value="PRK05419.2-2"/>
    <property type="match status" value="1"/>
</dbReference>
<dbReference type="PANTHER" id="PTHR36964">
    <property type="entry name" value="PROTEIN-METHIONINE-SULFOXIDE REDUCTASE HEME-BINDING SUBUNIT MSRQ"/>
    <property type="match status" value="1"/>
</dbReference>
<dbReference type="PANTHER" id="PTHR36964:SF1">
    <property type="entry name" value="PROTEIN-METHIONINE-SULFOXIDE REDUCTASE HEME-BINDING SUBUNIT MSRQ"/>
    <property type="match status" value="1"/>
</dbReference>
<dbReference type="Pfam" id="PF01794">
    <property type="entry name" value="Ferric_reduct"/>
    <property type="match status" value="1"/>
</dbReference>
<reference key="1">
    <citation type="journal article" date="2001" name="Proc. Natl. Acad. Sci. U.S.A.">
        <title>Complete genome sequence of Caulobacter crescentus.</title>
        <authorList>
            <person name="Nierman W.C."/>
            <person name="Feldblyum T.V."/>
            <person name="Laub M.T."/>
            <person name="Paulsen I.T."/>
            <person name="Nelson K.E."/>
            <person name="Eisen J.A."/>
            <person name="Heidelberg J.F."/>
            <person name="Alley M.R.K."/>
            <person name="Ohta N."/>
            <person name="Maddock J.R."/>
            <person name="Potocka I."/>
            <person name="Nelson W.C."/>
            <person name="Newton A."/>
            <person name="Stephens C."/>
            <person name="Phadke N.D."/>
            <person name="Ely B."/>
            <person name="DeBoy R.T."/>
            <person name="Dodson R.J."/>
            <person name="Durkin A.S."/>
            <person name="Gwinn M.L."/>
            <person name="Haft D.H."/>
            <person name="Kolonay J.F."/>
            <person name="Smit J."/>
            <person name="Craven M.B."/>
            <person name="Khouri H.M."/>
            <person name="Shetty J."/>
            <person name="Berry K.J."/>
            <person name="Utterback T.R."/>
            <person name="Tran K."/>
            <person name="Wolf A.M."/>
            <person name="Vamathevan J.J."/>
            <person name="Ermolaeva M.D."/>
            <person name="White O."/>
            <person name="Salzberg S.L."/>
            <person name="Venter J.C."/>
            <person name="Shapiro L."/>
            <person name="Fraser C.M."/>
        </authorList>
    </citation>
    <scope>NUCLEOTIDE SEQUENCE [LARGE SCALE GENOMIC DNA]</scope>
    <source>
        <strain>ATCC 19089 / CIP 103742 / CB 15</strain>
    </source>
</reference>
<gene>
    <name evidence="1" type="primary">msrQ</name>
    <name type="ordered locus">CC_2747</name>
</gene>
<comment type="function">
    <text evidence="1">Part of the MsrPQ system that repairs oxidized periplasmic proteins containing methionine sulfoxide residues (Met-O), using respiratory chain electrons. Thus protects these proteins from oxidative-stress damage caused by reactive species of oxygen and chlorine generated by the host defense mechanisms. MsrPQ is essential for the maintenance of envelope integrity under bleach stress, rescuing a wide series of structurally unrelated periplasmic proteins from methionine oxidation. MsrQ provides electrons for reduction to the reductase catalytic subunit MsrP, using the quinone pool of the respiratory chain.</text>
</comment>
<comment type="cofactor">
    <cofactor evidence="1">
        <name>FMN</name>
        <dbReference type="ChEBI" id="CHEBI:58210"/>
    </cofactor>
    <text evidence="1">Binds 1 FMN per subunit.</text>
</comment>
<comment type="cofactor">
    <cofactor evidence="1">
        <name>heme b</name>
        <dbReference type="ChEBI" id="CHEBI:60344"/>
    </cofactor>
    <text evidence="1">Binds 1 heme b (iron(II)-protoporphyrin IX) group per subunit.</text>
</comment>
<comment type="subunit">
    <text evidence="1">Heterodimer of a catalytic subunit (MsrP) and a heme-binding subunit (MsrQ).</text>
</comment>
<comment type="subcellular location">
    <subcellularLocation>
        <location evidence="1">Cell inner membrane</location>
        <topology evidence="1">Multi-pass membrane protein</topology>
    </subcellularLocation>
</comment>
<comment type="similarity">
    <text evidence="1">Belongs to the MsrQ family.</text>
</comment>
<comment type="sequence caution" evidence="2">
    <conflict type="erroneous initiation">
        <sequence resource="EMBL-CDS" id="AAK24711"/>
    </conflict>
</comment>
<keyword id="KW-0997">Cell inner membrane</keyword>
<keyword id="KW-1003">Cell membrane</keyword>
<keyword id="KW-0249">Electron transport</keyword>
<keyword id="KW-0285">Flavoprotein</keyword>
<keyword id="KW-0288">FMN</keyword>
<keyword id="KW-0349">Heme</keyword>
<keyword id="KW-0408">Iron</keyword>
<keyword id="KW-0472">Membrane</keyword>
<keyword id="KW-0479">Metal-binding</keyword>
<keyword id="KW-1185">Reference proteome</keyword>
<keyword id="KW-0812">Transmembrane</keyword>
<keyword id="KW-1133">Transmembrane helix</keyword>
<keyword id="KW-0813">Transport</keyword>
<proteinExistence type="inferred from homology"/>
<accession>Q9A4T3</accession>
<sequence>MAEPRRKKRPSKLQDTLVYGLVWLACFAPLAWLAWRGYAGELGANPIDKLIRELGEWGLRLLLVGLAITPAARILKMPRLVRFRRTVGLFAFAYVALHLLAYVGIDLFFDWNQLWKDILKRPFITLGMLGFMLLIPLAVTSTNGWVIRMGRAAWSRLHRLVYLIVPLGVAHYYLLVKADHRPPIIYGAVFVALMLWRVWEGRRTASKSSP</sequence>
<name>MSRQ_CAUVC</name>
<evidence type="ECO:0000255" key="1">
    <source>
        <dbReference type="HAMAP-Rule" id="MF_01207"/>
    </source>
</evidence>
<evidence type="ECO:0000305" key="2"/>
<organism>
    <name type="scientific">Caulobacter vibrioides (strain ATCC 19089 / CIP 103742 / CB 15)</name>
    <name type="common">Caulobacter crescentus</name>
    <dbReference type="NCBI Taxonomy" id="190650"/>
    <lineage>
        <taxon>Bacteria</taxon>
        <taxon>Pseudomonadati</taxon>
        <taxon>Pseudomonadota</taxon>
        <taxon>Alphaproteobacteria</taxon>
        <taxon>Caulobacterales</taxon>
        <taxon>Caulobacteraceae</taxon>
        <taxon>Caulobacter</taxon>
    </lineage>
</organism>
<feature type="chain" id="PRO_0000091572" description="Protein-methionine-sulfoxide reductase heme-binding subunit MsrQ">
    <location>
        <begin position="1"/>
        <end position="210"/>
    </location>
</feature>
<feature type="transmembrane region" description="Helical" evidence="1">
    <location>
        <begin position="15"/>
        <end position="35"/>
    </location>
</feature>
<feature type="transmembrane region" description="Helical" evidence="1">
    <location>
        <begin position="89"/>
        <end position="109"/>
    </location>
</feature>
<feature type="transmembrane region" description="Helical" evidence="1">
    <location>
        <begin position="122"/>
        <end position="142"/>
    </location>
</feature>
<feature type="transmembrane region" description="Helical" evidence="1">
    <location>
        <begin position="160"/>
        <end position="180"/>
    </location>
</feature>